<feature type="chain" id="PRO_0000402684" description="Ureidoacrylate amidohydrolase RutB">
    <location>
        <begin position="1"/>
        <end position="230"/>
    </location>
</feature>
<feature type="active site" description="Proton acceptor" evidence="1">
    <location>
        <position position="24"/>
    </location>
</feature>
<feature type="active site" evidence="1">
    <location>
        <position position="133"/>
    </location>
</feature>
<feature type="active site" description="Nucleophile" evidence="1">
    <location>
        <position position="166"/>
    </location>
</feature>
<reference key="1">
    <citation type="journal article" date="2009" name="PLoS Genet.">
        <title>Organised genome dynamics in the Escherichia coli species results in highly diverse adaptive paths.</title>
        <authorList>
            <person name="Touchon M."/>
            <person name="Hoede C."/>
            <person name="Tenaillon O."/>
            <person name="Barbe V."/>
            <person name="Baeriswyl S."/>
            <person name="Bidet P."/>
            <person name="Bingen E."/>
            <person name="Bonacorsi S."/>
            <person name="Bouchier C."/>
            <person name="Bouvet O."/>
            <person name="Calteau A."/>
            <person name="Chiapello H."/>
            <person name="Clermont O."/>
            <person name="Cruveiller S."/>
            <person name="Danchin A."/>
            <person name="Diard M."/>
            <person name="Dossat C."/>
            <person name="Karoui M.E."/>
            <person name="Frapy E."/>
            <person name="Garry L."/>
            <person name="Ghigo J.M."/>
            <person name="Gilles A.M."/>
            <person name="Johnson J."/>
            <person name="Le Bouguenec C."/>
            <person name="Lescat M."/>
            <person name="Mangenot S."/>
            <person name="Martinez-Jehanne V."/>
            <person name="Matic I."/>
            <person name="Nassif X."/>
            <person name="Oztas S."/>
            <person name="Petit M.A."/>
            <person name="Pichon C."/>
            <person name="Rouy Z."/>
            <person name="Ruf C.S."/>
            <person name="Schneider D."/>
            <person name="Tourret J."/>
            <person name="Vacherie B."/>
            <person name="Vallenet D."/>
            <person name="Medigue C."/>
            <person name="Rocha E.P.C."/>
            <person name="Denamur E."/>
        </authorList>
    </citation>
    <scope>NUCLEOTIDE SEQUENCE [LARGE SCALE GENOMIC DNA]</scope>
    <source>
        <strain>IAI1</strain>
    </source>
</reference>
<gene>
    <name evidence="1" type="primary">rutB</name>
    <name type="ordered locus">ECIAI1_1056</name>
</gene>
<dbReference type="EC" id="3.5.1.110" evidence="1"/>
<dbReference type="EMBL" id="CU928160">
    <property type="protein sequence ID" value="CAQ97920.1"/>
    <property type="molecule type" value="Genomic_DNA"/>
</dbReference>
<dbReference type="RefSeq" id="WP_001307708.1">
    <property type="nucleotide sequence ID" value="NC_011741.1"/>
</dbReference>
<dbReference type="SMR" id="B7M8Z6"/>
<dbReference type="GeneID" id="93776399"/>
<dbReference type="KEGG" id="ecr:ECIAI1_1056"/>
<dbReference type="HOGENOM" id="CLU_068979_8_0_6"/>
<dbReference type="GO" id="GO:0016811">
    <property type="term" value="F:hydrolase activity, acting on carbon-nitrogen (but not peptide) bonds, in linear amides"/>
    <property type="evidence" value="ECO:0007669"/>
    <property type="project" value="UniProtKB-UniRule"/>
</dbReference>
<dbReference type="GO" id="GO:0019740">
    <property type="term" value="P:nitrogen utilization"/>
    <property type="evidence" value="ECO:0007669"/>
    <property type="project" value="UniProtKB-UniRule"/>
</dbReference>
<dbReference type="GO" id="GO:0006212">
    <property type="term" value="P:uracil catabolic process"/>
    <property type="evidence" value="ECO:0007669"/>
    <property type="project" value="UniProtKB-UniRule"/>
</dbReference>
<dbReference type="CDD" id="cd00431">
    <property type="entry name" value="cysteine_hydrolases"/>
    <property type="match status" value="1"/>
</dbReference>
<dbReference type="FunFam" id="3.40.50.850:FF:000004">
    <property type="entry name" value="Peroxyureidoacrylate/ureidoacrylate amidohydrolase RutB"/>
    <property type="match status" value="1"/>
</dbReference>
<dbReference type="Gene3D" id="3.40.50.850">
    <property type="entry name" value="Isochorismatase-like"/>
    <property type="match status" value="1"/>
</dbReference>
<dbReference type="HAMAP" id="MF_00830">
    <property type="entry name" value="RutB"/>
    <property type="match status" value="1"/>
</dbReference>
<dbReference type="InterPro" id="IPR000868">
    <property type="entry name" value="Isochorismatase-like_dom"/>
</dbReference>
<dbReference type="InterPro" id="IPR050272">
    <property type="entry name" value="Isochorismatase-like_hydrls"/>
</dbReference>
<dbReference type="InterPro" id="IPR036380">
    <property type="entry name" value="Isochorismatase-like_sf"/>
</dbReference>
<dbReference type="InterPro" id="IPR019916">
    <property type="entry name" value="RutB"/>
</dbReference>
<dbReference type="NCBIfam" id="TIGR03614">
    <property type="entry name" value="RutB"/>
    <property type="match status" value="1"/>
</dbReference>
<dbReference type="PANTHER" id="PTHR43540:SF6">
    <property type="entry name" value="ISOCHORISMATASE-LIKE DOMAIN-CONTAINING PROTEIN"/>
    <property type="match status" value="1"/>
</dbReference>
<dbReference type="PANTHER" id="PTHR43540">
    <property type="entry name" value="PEROXYUREIDOACRYLATE/UREIDOACRYLATE AMIDOHYDROLASE-RELATED"/>
    <property type="match status" value="1"/>
</dbReference>
<dbReference type="Pfam" id="PF00857">
    <property type="entry name" value="Isochorismatase"/>
    <property type="match status" value="1"/>
</dbReference>
<dbReference type="SUPFAM" id="SSF52499">
    <property type="entry name" value="Isochorismatase-like hydrolases"/>
    <property type="match status" value="1"/>
</dbReference>
<sequence>MTTLTARPEAITFDPQQSALIVVDMQNAYATPGGYLDLAGFDVSTTRPVIANIQTAVTAARAAGMLIIWFQNGWDEQYVEAGGPGSPNFHKSNALKTMRKQPQLQGKLLAKGSWDYQLVDELVPQPGDIVLPKPRYSGFFNTPLDSILRSRGIRHLVFTGIATNVCVESTLRDGFFLEYFGVVLEDATHQAGPEFAQKAALFNIETFFGWVSDVETFCDALSPTSFARIA</sequence>
<comment type="function">
    <text evidence="1">Hydrolyzes ureidoacrylate to form aminoacrylate and carbamate. The carbamate hydrolyzes spontaneously, thereby releasing one of the nitrogen atoms of the pyrimidine ring as ammonia and one of its carbon atoms as CO2.</text>
</comment>
<comment type="catalytic activity">
    <reaction evidence="1">
        <text>(Z)-3-ureidoacrylate + H2O + H(+) = (Z)-3-aminoacrylate + NH4(+) + CO2</text>
        <dbReference type="Rhea" id="RHEA:42624"/>
        <dbReference type="ChEBI" id="CHEBI:15377"/>
        <dbReference type="ChEBI" id="CHEBI:15378"/>
        <dbReference type="ChEBI" id="CHEBI:16526"/>
        <dbReference type="ChEBI" id="CHEBI:28938"/>
        <dbReference type="ChEBI" id="CHEBI:59891"/>
        <dbReference type="ChEBI" id="CHEBI:59894"/>
        <dbReference type="EC" id="3.5.1.110"/>
    </reaction>
</comment>
<comment type="catalytic activity">
    <reaction evidence="1">
        <text>(Z)-3-ureidoacrylate + H2O = (Z)-3-aminoacrylate + carbamate + H(+)</text>
        <dbReference type="Rhea" id="RHEA:31603"/>
        <dbReference type="ChEBI" id="CHEBI:13941"/>
        <dbReference type="ChEBI" id="CHEBI:15377"/>
        <dbReference type="ChEBI" id="CHEBI:15378"/>
        <dbReference type="ChEBI" id="CHEBI:59891"/>
        <dbReference type="ChEBI" id="CHEBI:59894"/>
    </reaction>
</comment>
<comment type="catalytic activity">
    <reaction evidence="1">
        <text>(Z)-2-methylureidoacrylate + H2O + H(+) = (Z)-2-methylaminoacrylate + NH4(+) + CO2</text>
        <dbReference type="Rhea" id="RHEA:42620"/>
        <dbReference type="ChEBI" id="CHEBI:15377"/>
        <dbReference type="ChEBI" id="CHEBI:15378"/>
        <dbReference type="ChEBI" id="CHEBI:16526"/>
        <dbReference type="ChEBI" id="CHEBI:28938"/>
        <dbReference type="ChEBI" id="CHEBI:143783"/>
        <dbReference type="ChEBI" id="CHEBI:145735"/>
        <dbReference type="EC" id="3.5.1.110"/>
    </reaction>
</comment>
<comment type="induction">
    <text evidence="1">Up-regulated by the nitrogen regulatory protein C (NtrC also called GlnG) and repressed by RutR.</text>
</comment>
<comment type="similarity">
    <text evidence="1">Belongs to the isochorismatase family. RutB subfamily.</text>
</comment>
<accession>B7M8Z6</accession>
<proteinExistence type="inferred from homology"/>
<organism>
    <name type="scientific">Escherichia coli O8 (strain IAI1)</name>
    <dbReference type="NCBI Taxonomy" id="585034"/>
    <lineage>
        <taxon>Bacteria</taxon>
        <taxon>Pseudomonadati</taxon>
        <taxon>Pseudomonadota</taxon>
        <taxon>Gammaproteobacteria</taxon>
        <taxon>Enterobacterales</taxon>
        <taxon>Enterobacteriaceae</taxon>
        <taxon>Escherichia</taxon>
    </lineage>
</organism>
<evidence type="ECO:0000255" key="1">
    <source>
        <dbReference type="HAMAP-Rule" id="MF_00830"/>
    </source>
</evidence>
<keyword id="KW-0378">Hydrolase</keyword>
<name>RUTB_ECO8A</name>
<protein>
    <recommendedName>
        <fullName evidence="1">Ureidoacrylate amidohydrolase RutB</fullName>
        <ecNumber evidence="1">3.5.1.110</ecNumber>
    </recommendedName>
</protein>